<protein>
    <recommendedName>
        <fullName evidence="1">Transcriptional repressor NrdR</fullName>
    </recommendedName>
</protein>
<reference key="1">
    <citation type="journal article" date="2002" name="Proc. Natl. Acad. Sci. U.S.A.">
        <title>Extensive mosaic structure revealed by the complete genome sequence of uropathogenic Escherichia coli.</title>
        <authorList>
            <person name="Welch R.A."/>
            <person name="Burland V."/>
            <person name="Plunkett G. III"/>
            <person name="Redford P."/>
            <person name="Roesch P."/>
            <person name="Rasko D."/>
            <person name="Buckles E.L."/>
            <person name="Liou S.-R."/>
            <person name="Boutin A."/>
            <person name="Hackett J."/>
            <person name="Stroud D."/>
            <person name="Mayhew G.F."/>
            <person name="Rose D.J."/>
            <person name="Zhou S."/>
            <person name="Schwartz D.C."/>
            <person name="Perna N.T."/>
            <person name="Mobley H.L.T."/>
            <person name="Donnenberg M.S."/>
            <person name="Blattner F.R."/>
        </authorList>
    </citation>
    <scope>NUCLEOTIDE SEQUENCE [LARGE SCALE GENOMIC DNA]</scope>
    <source>
        <strain>CFT073 / ATCC 700928 / UPEC</strain>
    </source>
</reference>
<accession>P0A8D1</accession>
<accession>P25538</accession>
<evidence type="ECO:0000255" key="1">
    <source>
        <dbReference type="HAMAP-Rule" id="MF_00440"/>
    </source>
</evidence>
<dbReference type="EMBL" id="AE014075">
    <property type="protein sequence ID" value="AAN79001.1"/>
    <property type="molecule type" value="Genomic_DNA"/>
</dbReference>
<dbReference type="RefSeq" id="WP_000543535.1">
    <property type="nucleotide sequence ID" value="NZ_CP051263.1"/>
</dbReference>
<dbReference type="SMR" id="P0A8D1"/>
<dbReference type="STRING" id="199310.c0523"/>
<dbReference type="GeneID" id="93777047"/>
<dbReference type="KEGG" id="ecc:c0523"/>
<dbReference type="eggNOG" id="COG1327">
    <property type="taxonomic scope" value="Bacteria"/>
</dbReference>
<dbReference type="HOGENOM" id="CLU_108412_0_0_6"/>
<dbReference type="BioCyc" id="ECOL199310:C0523-MONOMER"/>
<dbReference type="Proteomes" id="UP000001410">
    <property type="component" value="Chromosome"/>
</dbReference>
<dbReference type="GO" id="GO:0005524">
    <property type="term" value="F:ATP binding"/>
    <property type="evidence" value="ECO:0007669"/>
    <property type="project" value="UniProtKB-KW"/>
</dbReference>
<dbReference type="GO" id="GO:0003677">
    <property type="term" value="F:DNA binding"/>
    <property type="evidence" value="ECO:0007669"/>
    <property type="project" value="UniProtKB-KW"/>
</dbReference>
<dbReference type="GO" id="GO:0008270">
    <property type="term" value="F:zinc ion binding"/>
    <property type="evidence" value="ECO:0007669"/>
    <property type="project" value="UniProtKB-UniRule"/>
</dbReference>
<dbReference type="GO" id="GO:0045892">
    <property type="term" value="P:negative regulation of DNA-templated transcription"/>
    <property type="evidence" value="ECO:0007669"/>
    <property type="project" value="UniProtKB-UniRule"/>
</dbReference>
<dbReference type="HAMAP" id="MF_00440">
    <property type="entry name" value="NrdR"/>
    <property type="match status" value="1"/>
</dbReference>
<dbReference type="InterPro" id="IPR005144">
    <property type="entry name" value="ATP-cone_dom"/>
</dbReference>
<dbReference type="InterPro" id="IPR055173">
    <property type="entry name" value="NrdR-like_N"/>
</dbReference>
<dbReference type="InterPro" id="IPR003796">
    <property type="entry name" value="RNR_NrdR-like"/>
</dbReference>
<dbReference type="NCBIfam" id="TIGR00244">
    <property type="entry name" value="transcriptional regulator NrdR"/>
    <property type="match status" value="1"/>
</dbReference>
<dbReference type="PANTHER" id="PTHR30455">
    <property type="entry name" value="TRANSCRIPTIONAL REPRESSOR NRDR"/>
    <property type="match status" value="1"/>
</dbReference>
<dbReference type="PANTHER" id="PTHR30455:SF2">
    <property type="entry name" value="TRANSCRIPTIONAL REPRESSOR NRDR"/>
    <property type="match status" value="1"/>
</dbReference>
<dbReference type="Pfam" id="PF03477">
    <property type="entry name" value="ATP-cone"/>
    <property type="match status" value="1"/>
</dbReference>
<dbReference type="Pfam" id="PF22811">
    <property type="entry name" value="Zn_ribbon_NrdR"/>
    <property type="match status" value="1"/>
</dbReference>
<dbReference type="PROSITE" id="PS51161">
    <property type="entry name" value="ATP_CONE"/>
    <property type="match status" value="1"/>
</dbReference>
<gene>
    <name evidence="1" type="primary">nrdR</name>
    <name type="synonym">ybaD</name>
    <name type="ordered locus">c0523</name>
</gene>
<keyword id="KW-0067">ATP-binding</keyword>
<keyword id="KW-0238">DNA-binding</keyword>
<keyword id="KW-0479">Metal-binding</keyword>
<keyword id="KW-0547">Nucleotide-binding</keyword>
<keyword id="KW-1185">Reference proteome</keyword>
<keyword id="KW-0678">Repressor</keyword>
<keyword id="KW-0804">Transcription</keyword>
<keyword id="KW-0805">Transcription regulation</keyword>
<keyword id="KW-0862">Zinc</keyword>
<keyword id="KW-0863">Zinc-finger</keyword>
<proteinExistence type="inferred from homology"/>
<organism>
    <name type="scientific">Escherichia coli O6:H1 (strain CFT073 / ATCC 700928 / UPEC)</name>
    <dbReference type="NCBI Taxonomy" id="199310"/>
    <lineage>
        <taxon>Bacteria</taxon>
        <taxon>Pseudomonadati</taxon>
        <taxon>Pseudomonadota</taxon>
        <taxon>Gammaproteobacteria</taxon>
        <taxon>Enterobacterales</taxon>
        <taxon>Enterobacteriaceae</taxon>
        <taxon>Escherichia</taxon>
    </lineage>
</organism>
<comment type="function">
    <text evidence="1">Negatively regulates transcription of bacterial ribonucleotide reductase nrd genes and operons by binding to NrdR-boxes.</text>
</comment>
<comment type="cofactor">
    <cofactor evidence="1">
        <name>Zn(2+)</name>
        <dbReference type="ChEBI" id="CHEBI:29105"/>
    </cofactor>
    <text evidence="1">Binds 1 zinc ion.</text>
</comment>
<comment type="similarity">
    <text evidence="1">Belongs to the NrdR family.</text>
</comment>
<name>NRDR_ECOL6</name>
<feature type="chain" id="PRO_0000182298" description="Transcriptional repressor NrdR">
    <location>
        <begin position="1"/>
        <end position="149"/>
    </location>
</feature>
<feature type="domain" description="ATP-cone" evidence="1">
    <location>
        <begin position="49"/>
        <end position="139"/>
    </location>
</feature>
<feature type="zinc finger region" evidence="1">
    <location>
        <begin position="3"/>
        <end position="34"/>
    </location>
</feature>
<sequence>MHCPFCFAVDTKVIDSRLVGEGSSVRRRRQCLVCNERFTTFEVAELVMPRVVKSNDVREPFNEEKLRSGMLRALEKRPVSSDDVEMAINHIKSQLRATGEREVPSKMIGNLVMEQLKKLDKVAYIRFASVYRSFEDIKEFGEEIARLED</sequence>